<protein>
    <recommendedName>
        <fullName>Carbon monoxide dehydrogenase large chain</fullName>
        <shortName>CO dehydrogenase subunit L</shortName>
        <shortName>CO-DH L</shortName>
        <ecNumber evidence="2 4">1.2.5.3</ecNumber>
    </recommendedName>
</protein>
<name>DCML_AFIC5</name>
<gene>
    <name type="primary">coxL</name>
    <name type="ordered locus">OCA5_pHCG300310</name>
</gene>
<accession>P19919</accession>
<accession>F8C0Z6</accession>
<accession>Q51325</accession>
<keyword id="KW-0002">3D-structure</keyword>
<keyword id="KW-0186">Copper</keyword>
<keyword id="KW-0903">Direct protein sequencing</keyword>
<keyword id="KW-0479">Metal-binding</keyword>
<keyword id="KW-0500">Molybdenum</keyword>
<keyword id="KW-0560">Oxidoreductase</keyword>
<keyword id="KW-0614">Plasmid</keyword>
<keyword id="KW-1185">Reference proteome</keyword>
<proteinExistence type="evidence at protein level"/>
<organism>
    <name type="scientific">Afipia carboxidovorans (strain ATCC 49405 / DSM 1227 / KCTC 32145 / OM5)</name>
    <name type="common">Oligotropha carboxidovorans</name>
    <dbReference type="NCBI Taxonomy" id="504832"/>
    <lineage>
        <taxon>Bacteria</taxon>
        <taxon>Pseudomonadati</taxon>
        <taxon>Pseudomonadota</taxon>
        <taxon>Alphaproteobacteria</taxon>
        <taxon>Hyphomicrobiales</taxon>
        <taxon>Nitrobacteraceae</taxon>
        <taxon>Afipia</taxon>
    </lineage>
</organism>
<reference key="1">
    <citation type="journal article" date="1995" name="J. Bacteriol.">
        <title>Molecular characterization of the gene cluster coxMSL encoding the molybdenum-containing carbon monoxide dehydrogenase of Oligotropha carboxidovorans.</title>
        <authorList>
            <person name="Schuebel U."/>
            <person name="Kraut M."/>
            <person name="Moersdorf G."/>
            <person name="Meyer O."/>
        </authorList>
    </citation>
    <scope>NUCLEOTIDE SEQUENCE [GENOMIC DNA]</scope>
    <source>
        <strain>ATCC 49405 / DSM 1227 / KCTC 32145 / OM5</strain>
    </source>
</reference>
<reference key="2">
    <citation type="journal article" date="2003" name="Gene">
        <title>Complete nucleotide sequence of the circular megaplasmid pHCG3 of Oligotropha carboxidovorans: function in the chemolithoautotrophic utilization of CO, H(2) and CO(2).</title>
        <authorList>
            <person name="Fuhrmann S."/>
            <person name="Ferner M."/>
            <person name="Jeffke T."/>
            <person name="Henne A."/>
            <person name="Gottschalk G."/>
            <person name="Meyer O."/>
        </authorList>
    </citation>
    <scope>NUCLEOTIDE SEQUENCE [LARGE SCALE GENOMIC DNA]</scope>
    <source>
        <strain>ATCC 49405 / DSM 1227 / KCTC 32145 / OM5</strain>
    </source>
</reference>
<reference key="3">
    <citation type="journal article" date="2011" name="J. Bacteriol.">
        <title>Complete genome sequences of the chemolithoautotrophic Oligotropha carboxidovorans strains OM4 and OM5.</title>
        <authorList>
            <person name="Volland S."/>
            <person name="Rachinger M."/>
            <person name="Strittmatter A."/>
            <person name="Daniel R."/>
            <person name="Gottschalk G."/>
            <person name="Meyer O."/>
        </authorList>
    </citation>
    <scope>NUCLEOTIDE SEQUENCE [LARGE SCALE GENOMIC DNA]</scope>
    <source>
        <strain>ATCC 49405 / DSM 1227 / KCTC 32145 / OM5</strain>
    </source>
</reference>
<reference key="4">
    <citation type="journal article" date="1989" name="Arch. Microbiol.">
        <title>Homology and distribution of CO dehydrogenase structural genes in carboxydotrophic bacteria.</title>
        <authorList>
            <person name="Kraut M."/>
            <person name="Hugendieck I."/>
            <person name="Herwig S."/>
            <person name="Meyer O."/>
        </authorList>
    </citation>
    <scope>PROTEIN SEQUENCE OF 1-13</scope>
</reference>
<reference key="5">
    <citation type="journal article" date="2003" name="Biochemistry">
        <title>A novel binuclear [CuSMo] cluster at the active site of carbon monoxide dehydrogenase: characterization by X-ray absorption spectroscopy.</title>
        <authorList>
            <person name="Gnida M."/>
            <person name="Ferner R."/>
            <person name="Gremer L."/>
            <person name="Meyer O."/>
            <person name="Meyer-Klaucke W."/>
        </authorList>
    </citation>
    <scope>COFACTOR</scope>
</reference>
<reference key="6">
    <citation type="journal article" date="2011" name="Biochemistry">
        <title>Reaction of the molybdenum- and copper-containing carbon monoxide dehydrogenase from Oligotropha carboxydovorans with quinones.</title>
        <authorList>
            <person name="Wilcoxen J."/>
            <person name="Zhang B."/>
            <person name="Hille R."/>
        </authorList>
    </citation>
    <scope>FUNCTION</scope>
    <scope>CATALYTIC ACTIVITY</scope>
    <scope>BIOPHYSICOCHEMICAL PROPERTIES</scope>
</reference>
<reference key="7">
    <citation type="journal article" date="1999" name="Proc. Natl. Acad. Sci. U.S.A.">
        <title>Crystal structure and mechanism of CO dehydrogenase, a molybdo iron-sulfur flavoprotein containing S-selanylcysteine.</title>
        <authorList>
            <person name="Dobbek H."/>
            <person name="Gremer L."/>
            <person name="Meyer O."/>
            <person name="Huber R."/>
        </authorList>
    </citation>
    <scope>X-RAY CRYSTALLOGRAPHY (2.2 ANGSTROMS) IN COMPLEX WITH CODH MEDIUM AND SMALL SUBUNITS; COPPER AND MOLYBDOPTERIN CYTOSINE DINUCLEOTIDE</scope>
    <scope>COFACTOR</scope>
    <scope>SUBUNIT</scope>
</reference>
<reference key="8">
    <citation type="journal article" date="2002" name="Proc. Natl. Acad. Sci. U.S.A.">
        <title>Catalysis at a dinuclear CuSMo(==O)OH cluster in a CO dehydrogenase resolved at 1.1-A resolution.</title>
        <authorList>
            <person name="Dobbek H."/>
            <person name="Gremer L."/>
            <person name="Kiefersauer R."/>
            <person name="Huber R."/>
            <person name="Meyer O."/>
        </authorList>
    </citation>
    <scope>X-RAY CRYSTALLOGRAPHY (1.09 ANGSTROMS) IN COMPLEX WITH CODH MEDIUM AND SMALL SUBUNITS; COPPER AND MOLYBDOPTERIN CYTOSINE DINUCLEOTIDE</scope>
    <scope>FUNCTION</scope>
    <scope>COFACTOR</scope>
    <scope>CATALYTIC ACTIVITY</scope>
    <scope>REACTION MECHANISM</scope>
</reference>
<evidence type="ECO:0000269" key="1">
    <source>
    </source>
</evidence>
<evidence type="ECO:0000269" key="2">
    <source>
    </source>
</evidence>
<evidence type="ECO:0000269" key="3">
    <source>
    </source>
</evidence>
<evidence type="ECO:0000269" key="4">
    <source>
    </source>
</evidence>
<evidence type="ECO:0000305" key="5"/>
<evidence type="ECO:0007829" key="6">
    <source>
        <dbReference type="PDB" id="1N62"/>
    </source>
</evidence>
<comment type="function">
    <text evidence="2 4">Catalyzes the oxidation of carbon monoxide to carbon dioxide.</text>
</comment>
<comment type="catalytic activity">
    <reaction evidence="2 4">
        <text>CO + a quinone + H2O = a quinol + CO2</text>
        <dbReference type="Rhea" id="RHEA:48880"/>
        <dbReference type="ChEBI" id="CHEBI:15377"/>
        <dbReference type="ChEBI" id="CHEBI:16526"/>
        <dbReference type="ChEBI" id="CHEBI:17245"/>
        <dbReference type="ChEBI" id="CHEBI:24646"/>
        <dbReference type="ChEBI" id="CHEBI:132124"/>
        <dbReference type="EC" id="1.2.5.3"/>
    </reaction>
</comment>
<comment type="cofactor">
    <cofactor evidence="2 3">
        <name>Cu(+)</name>
        <dbReference type="ChEBI" id="CHEBI:49552"/>
    </cofactor>
    <text evidence="2 3">Binds 1 Cu(+) ion per subunit.</text>
</comment>
<comment type="cofactor">
    <cofactor evidence="1 2 3">
        <name>Mo-molybdopterin cytosine dinucleotide</name>
        <dbReference type="ChEBI" id="CHEBI:71308"/>
    </cofactor>
    <text evidence="1 2 3">Binds 1 Mo-molybdopterin cytosine dinucleotide (Mo-MCD) cofactor per subunit.</text>
</comment>
<comment type="biophysicochemical properties">
    <kinetics>
        <KM evidence="4">16.4 uM for 1,4-benzoquinone</KM>
    </kinetics>
</comment>
<comment type="subunit">
    <text evidence="1">Dimer of heterotrimers. Each heterotrimer consists of a large, a medium and a small subunit.</text>
</comment>
<dbReference type="EC" id="1.2.5.3" evidence="2 4"/>
<dbReference type="EMBL" id="CP002827">
    <property type="protein sequence ID" value="AEI08106.1"/>
    <property type="molecule type" value="Genomic_DNA"/>
</dbReference>
<dbReference type="PIR" id="C56279">
    <property type="entry name" value="C56279"/>
</dbReference>
<dbReference type="RefSeq" id="WP_013913730.1">
    <property type="nucleotide sequence ID" value="NC_015689.1"/>
</dbReference>
<dbReference type="PDB" id="1N5W">
    <property type="method" value="X-ray"/>
    <property type="resolution" value="1.50 A"/>
    <property type="chains" value="B/E=1-809"/>
</dbReference>
<dbReference type="PDB" id="1N60">
    <property type="method" value="X-ray"/>
    <property type="resolution" value="1.19 A"/>
    <property type="chains" value="B/E=1-809"/>
</dbReference>
<dbReference type="PDB" id="1N61">
    <property type="method" value="X-ray"/>
    <property type="resolution" value="1.30 A"/>
    <property type="chains" value="B/E=1-809"/>
</dbReference>
<dbReference type="PDB" id="1N62">
    <property type="method" value="X-ray"/>
    <property type="resolution" value="1.09 A"/>
    <property type="chains" value="B/E=1-809"/>
</dbReference>
<dbReference type="PDB" id="1N63">
    <property type="method" value="X-ray"/>
    <property type="resolution" value="1.21 A"/>
    <property type="chains" value="B/E=1-809"/>
</dbReference>
<dbReference type="PDB" id="1ZXI">
    <property type="method" value="X-ray"/>
    <property type="resolution" value="1.70 A"/>
    <property type="chains" value="B/E=1-809"/>
</dbReference>
<dbReference type="PDBsum" id="1N5W"/>
<dbReference type="PDBsum" id="1N60"/>
<dbReference type="PDBsum" id="1N61"/>
<dbReference type="PDBsum" id="1N62"/>
<dbReference type="PDBsum" id="1N63"/>
<dbReference type="PDBsum" id="1ZXI"/>
<dbReference type="SMR" id="P19919"/>
<dbReference type="KEGG" id="ocg:OCA5_pHCG300310"/>
<dbReference type="PATRIC" id="fig|504832.7.peg.3606"/>
<dbReference type="HOGENOM" id="CLU_001681_2_0_5"/>
<dbReference type="OrthoDB" id="9758509at2"/>
<dbReference type="BioCyc" id="MetaCyc:MONOMER-19674"/>
<dbReference type="BRENDA" id="1.2.5.3">
    <property type="organism ID" value="4399"/>
</dbReference>
<dbReference type="BRENDA" id="1.2.7.4">
    <property type="organism ID" value="4399"/>
</dbReference>
<dbReference type="SABIO-RK" id="P19919"/>
<dbReference type="EvolutionaryTrace" id="P19919"/>
<dbReference type="Proteomes" id="UP000007730">
    <property type="component" value="Plasmid pHCG3"/>
</dbReference>
<dbReference type="GO" id="GO:0043885">
    <property type="term" value="F:anaerobic carbon-monoxide dehydrogenase activity"/>
    <property type="evidence" value="ECO:0007669"/>
    <property type="project" value="InterPro"/>
</dbReference>
<dbReference type="GO" id="GO:0008805">
    <property type="term" value="F:carbon-monoxide oxygenase activity"/>
    <property type="evidence" value="ECO:0007669"/>
    <property type="project" value="UniProtKB-EC"/>
</dbReference>
<dbReference type="GO" id="GO:0005507">
    <property type="term" value="F:copper ion binding"/>
    <property type="evidence" value="ECO:0007669"/>
    <property type="project" value="InterPro"/>
</dbReference>
<dbReference type="GO" id="GO:0005506">
    <property type="term" value="F:iron ion binding"/>
    <property type="evidence" value="ECO:0007669"/>
    <property type="project" value="InterPro"/>
</dbReference>
<dbReference type="GO" id="GO:0030151">
    <property type="term" value="F:molybdenum ion binding"/>
    <property type="evidence" value="ECO:0007669"/>
    <property type="project" value="InterPro"/>
</dbReference>
<dbReference type="FunFam" id="3.30.365.10:FF:000005">
    <property type="entry name" value="Carbon monoxide dehydrogenase large chain"/>
    <property type="match status" value="1"/>
</dbReference>
<dbReference type="FunFam" id="3.90.1170.50:FF:000006">
    <property type="entry name" value="Carbon monoxide dehydrogenase large chain"/>
    <property type="match status" value="1"/>
</dbReference>
<dbReference type="FunFam" id="3.30.365.10:FF:000001">
    <property type="entry name" value="Xanthine dehydrogenase oxidase"/>
    <property type="match status" value="1"/>
</dbReference>
<dbReference type="Gene3D" id="3.90.1170.50">
    <property type="entry name" value="Aldehyde oxidase/xanthine dehydrogenase, a/b hammerhead"/>
    <property type="match status" value="1"/>
</dbReference>
<dbReference type="Gene3D" id="3.30.365.10">
    <property type="entry name" value="Aldehyde oxidase/xanthine dehydrogenase, molybdopterin binding domain"/>
    <property type="match status" value="4"/>
</dbReference>
<dbReference type="InterPro" id="IPR000674">
    <property type="entry name" value="Ald_Oxase/Xan_DH_a/b"/>
</dbReference>
<dbReference type="InterPro" id="IPR036856">
    <property type="entry name" value="Ald_Oxase/Xan_DH_a/b_sf"/>
</dbReference>
<dbReference type="InterPro" id="IPR016208">
    <property type="entry name" value="Ald_Oxase/xanthine_DH-like"/>
</dbReference>
<dbReference type="InterPro" id="IPR008274">
    <property type="entry name" value="AldOxase/xan_DH_MoCoBD1"/>
</dbReference>
<dbReference type="InterPro" id="IPR046867">
    <property type="entry name" value="AldOxase/xan_DH_MoCoBD2"/>
</dbReference>
<dbReference type="InterPro" id="IPR037165">
    <property type="entry name" value="AldOxase/xan_DH_Mopterin-bd_sf"/>
</dbReference>
<dbReference type="InterPro" id="IPR012780">
    <property type="entry name" value="CO_Mo_DH_lsu"/>
</dbReference>
<dbReference type="NCBIfam" id="TIGR02416">
    <property type="entry name" value="CO_dehy_Mo_lg"/>
    <property type="match status" value="1"/>
</dbReference>
<dbReference type="PANTHER" id="PTHR11908:SF132">
    <property type="entry name" value="ALDEHYDE OXIDASE 1-RELATED"/>
    <property type="match status" value="1"/>
</dbReference>
<dbReference type="PANTHER" id="PTHR11908">
    <property type="entry name" value="XANTHINE DEHYDROGENASE"/>
    <property type="match status" value="1"/>
</dbReference>
<dbReference type="Pfam" id="PF01315">
    <property type="entry name" value="Ald_Xan_dh_C"/>
    <property type="match status" value="1"/>
</dbReference>
<dbReference type="Pfam" id="PF02738">
    <property type="entry name" value="MoCoBD_1"/>
    <property type="match status" value="1"/>
</dbReference>
<dbReference type="Pfam" id="PF20256">
    <property type="entry name" value="MoCoBD_2"/>
    <property type="match status" value="1"/>
</dbReference>
<dbReference type="SMART" id="SM01008">
    <property type="entry name" value="Ald_Xan_dh_C"/>
    <property type="match status" value="1"/>
</dbReference>
<dbReference type="SUPFAM" id="SSF54665">
    <property type="entry name" value="CO dehydrogenase molybdoprotein N-domain-like"/>
    <property type="match status" value="1"/>
</dbReference>
<dbReference type="SUPFAM" id="SSF56003">
    <property type="entry name" value="Molybdenum cofactor-binding domain"/>
    <property type="match status" value="1"/>
</dbReference>
<feature type="chain" id="PRO_0000079810" description="Carbon monoxide dehydrogenase large chain">
    <location>
        <begin position="1"/>
        <end position="809"/>
    </location>
</feature>
<feature type="binding site" evidence="2">
    <location>
        <position position="388"/>
    </location>
    <ligand>
        <name>Cu(+)</name>
        <dbReference type="ChEBI" id="CHEBI:49552"/>
    </ligand>
</feature>
<feature type="binding site" evidence="1 2">
    <location>
        <position position="763"/>
    </location>
    <ligand>
        <name>Mo-molybdopterin cytosine dinucleotide</name>
        <dbReference type="ChEBI" id="CHEBI:71308"/>
    </ligand>
    <ligandPart>
        <name>Mo</name>
        <dbReference type="ChEBI" id="CHEBI:28685"/>
    </ligandPart>
</feature>
<feature type="sequence conflict" description="In Ref. 4; AA sequence." evidence="5" ref="4">
    <location>
        <position position="6"/>
    </location>
</feature>
<feature type="sequence conflict" description="In Ref. 4; AA sequence." evidence="5" ref="4">
    <original>SA</original>
    <variation>AG</variation>
    <location>
        <begin position="11"/>
        <end position="12"/>
    </location>
</feature>
<feature type="helix" evidence="6">
    <location>
        <begin position="11"/>
        <end position="18"/>
    </location>
</feature>
<feature type="helix" evidence="6">
    <location>
        <begin position="30"/>
        <end position="33"/>
    </location>
</feature>
<feature type="turn" evidence="6">
    <location>
        <begin position="34"/>
        <end position="36"/>
    </location>
</feature>
<feature type="helix" evidence="6">
    <location>
        <begin position="41"/>
        <end position="43"/>
    </location>
</feature>
<feature type="strand" evidence="6">
    <location>
        <begin position="50"/>
        <end position="56"/>
    </location>
</feature>
<feature type="strand" evidence="6">
    <location>
        <begin position="60"/>
        <end position="68"/>
    </location>
</feature>
<feature type="helix" evidence="6">
    <location>
        <begin position="70"/>
        <end position="74"/>
    </location>
</feature>
<feature type="strand" evidence="6">
    <location>
        <begin position="78"/>
        <end position="83"/>
    </location>
</feature>
<feature type="helix" evidence="6">
    <location>
        <begin position="84"/>
        <end position="87"/>
    </location>
</feature>
<feature type="helix" evidence="6">
    <location>
        <begin position="88"/>
        <end position="90"/>
    </location>
</feature>
<feature type="strand" evidence="6">
    <location>
        <begin position="93"/>
        <end position="96"/>
    </location>
</feature>
<feature type="strand" evidence="6">
    <location>
        <begin position="100"/>
        <end position="106"/>
    </location>
</feature>
<feature type="strand" evidence="6">
    <location>
        <begin position="108"/>
        <end position="111"/>
    </location>
</feature>
<feature type="strand" evidence="6">
    <location>
        <begin position="117"/>
        <end position="125"/>
    </location>
</feature>
<feature type="helix" evidence="6">
    <location>
        <begin position="126"/>
        <end position="135"/>
    </location>
</feature>
<feature type="strand" evidence="6">
    <location>
        <begin position="137"/>
        <end position="142"/>
    </location>
</feature>
<feature type="helix" evidence="6">
    <location>
        <begin position="149"/>
        <end position="151"/>
    </location>
</feature>
<feature type="helix" evidence="6">
    <location>
        <begin position="162"/>
        <end position="164"/>
    </location>
</feature>
<feature type="strand" evidence="6">
    <location>
        <begin position="180"/>
        <end position="187"/>
    </location>
</feature>
<feature type="helix" evidence="6">
    <location>
        <begin position="189"/>
        <end position="198"/>
    </location>
</feature>
<feature type="strand" evidence="6">
    <location>
        <begin position="200"/>
        <end position="209"/>
    </location>
</feature>
<feature type="strand" evidence="6">
    <location>
        <begin position="221"/>
        <end position="227"/>
    </location>
</feature>
<feature type="turn" evidence="6">
    <location>
        <begin position="228"/>
        <end position="231"/>
    </location>
</feature>
<feature type="strand" evidence="6">
    <location>
        <begin position="232"/>
        <end position="237"/>
    </location>
</feature>
<feature type="helix" evidence="6">
    <location>
        <begin position="242"/>
        <end position="253"/>
    </location>
</feature>
<feature type="helix" evidence="6">
    <location>
        <begin position="257"/>
        <end position="259"/>
    </location>
</feature>
<feature type="strand" evidence="6">
    <location>
        <begin position="260"/>
        <end position="263"/>
    </location>
</feature>
<feature type="turn" evidence="6">
    <location>
        <begin position="271"/>
        <end position="274"/>
    </location>
</feature>
<feature type="helix" evidence="6">
    <location>
        <begin position="279"/>
        <end position="291"/>
    </location>
</feature>
<feature type="strand" evidence="6">
    <location>
        <begin position="295"/>
        <end position="298"/>
    </location>
</feature>
<feature type="helix" evidence="6">
    <location>
        <begin position="301"/>
        <end position="307"/>
    </location>
</feature>
<feature type="strand" evidence="6">
    <location>
        <begin position="314"/>
        <end position="322"/>
    </location>
</feature>
<feature type="strand" evidence="6">
    <location>
        <begin position="328"/>
        <end position="338"/>
    </location>
</feature>
<feature type="turn" evidence="6">
    <location>
        <begin position="352"/>
        <end position="355"/>
    </location>
</feature>
<feature type="helix" evidence="6">
    <location>
        <begin position="356"/>
        <end position="358"/>
    </location>
</feature>
<feature type="turn" evidence="6">
    <location>
        <begin position="359"/>
        <end position="362"/>
    </location>
</feature>
<feature type="strand" evidence="6">
    <location>
        <begin position="368"/>
        <end position="375"/>
    </location>
</feature>
<feature type="strand" evidence="6">
    <location>
        <begin position="382"/>
        <end position="384"/>
    </location>
</feature>
<feature type="turn" evidence="6">
    <location>
        <begin position="389"/>
        <end position="391"/>
    </location>
</feature>
<feature type="helix" evidence="6">
    <location>
        <begin position="392"/>
        <end position="410"/>
    </location>
</feature>
<feature type="helix" evidence="6">
    <location>
        <begin position="414"/>
        <end position="421"/>
    </location>
</feature>
<feature type="helix" evidence="6">
    <location>
        <begin position="425"/>
        <end position="427"/>
    </location>
</feature>
<feature type="strand" evidence="6">
    <location>
        <begin position="429"/>
        <end position="431"/>
    </location>
</feature>
<feature type="helix" evidence="6">
    <location>
        <begin position="443"/>
        <end position="454"/>
    </location>
</feature>
<feature type="helix" evidence="6">
    <location>
        <begin position="456"/>
        <end position="471"/>
    </location>
</feature>
<feature type="strand" evidence="6">
    <location>
        <begin position="476"/>
        <end position="487"/>
    </location>
</feature>
<feature type="turn" evidence="6">
    <location>
        <begin position="495"/>
        <end position="497"/>
    </location>
</feature>
<feature type="strand" evidence="6">
    <location>
        <begin position="507"/>
        <end position="513"/>
    </location>
</feature>
<feature type="strand" evidence="6">
    <location>
        <begin position="519"/>
        <end position="524"/>
    </location>
</feature>
<feature type="strand" evidence="6">
    <location>
        <begin position="528"/>
        <end position="530"/>
    </location>
</feature>
<feature type="helix" evidence="6">
    <location>
        <begin position="532"/>
        <end position="544"/>
    </location>
</feature>
<feature type="helix" evidence="6">
    <location>
        <begin position="548"/>
        <end position="550"/>
    </location>
</feature>
<feature type="strand" evidence="6">
    <location>
        <begin position="551"/>
        <end position="554"/>
    </location>
</feature>
<feature type="turn" evidence="6">
    <location>
        <begin position="558"/>
        <end position="560"/>
    </location>
</feature>
<feature type="turn" evidence="6">
    <location>
        <begin position="572"/>
        <end position="575"/>
    </location>
</feature>
<feature type="helix" evidence="6">
    <location>
        <begin position="576"/>
        <end position="599"/>
    </location>
</feature>
<feature type="helix" evidence="6">
    <location>
        <begin position="603"/>
        <end position="605"/>
    </location>
</feature>
<feature type="strand" evidence="6">
    <location>
        <begin position="606"/>
        <end position="608"/>
    </location>
</feature>
<feature type="strand" evidence="6">
    <location>
        <begin position="610"/>
        <end position="615"/>
    </location>
</feature>
<feature type="strand" evidence="6">
    <location>
        <begin position="618"/>
        <end position="624"/>
    </location>
</feature>
<feature type="helix" evidence="6">
    <location>
        <begin position="625"/>
        <end position="634"/>
    </location>
</feature>
<feature type="strand" evidence="6">
    <location>
        <begin position="642"/>
        <end position="650"/>
    </location>
</feature>
<feature type="strand" evidence="6">
    <location>
        <begin position="659"/>
        <end position="669"/>
    </location>
</feature>
<feature type="turn" evidence="6">
    <location>
        <begin position="670"/>
        <end position="672"/>
    </location>
</feature>
<feature type="strand" evidence="6">
    <location>
        <begin position="675"/>
        <end position="685"/>
    </location>
</feature>
<feature type="helix" evidence="6">
    <location>
        <begin position="692"/>
        <end position="711"/>
    </location>
</feature>
<feature type="strand" evidence="6">
    <location>
        <begin position="723"/>
        <end position="725"/>
    </location>
</feature>
<feature type="turn" evidence="6">
    <location>
        <begin position="728"/>
        <end position="730"/>
    </location>
</feature>
<feature type="turn" evidence="6">
    <location>
        <begin position="736"/>
        <end position="738"/>
    </location>
</feature>
<feature type="strand" evidence="6">
    <location>
        <begin position="743"/>
        <end position="746"/>
    </location>
</feature>
<feature type="helix" evidence="6">
    <location>
        <begin position="764"/>
        <end position="782"/>
    </location>
</feature>
<feature type="turn" evidence="6">
    <location>
        <begin position="783"/>
        <end position="785"/>
    </location>
</feature>
<feature type="helix" evidence="6">
    <location>
        <begin position="795"/>
        <end position="804"/>
    </location>
</feature>
<feature type="turn" evidence="6">
    <location>
        <begin position="805"/>
        <end position="808"/>
    </location>
</feature>
<sequence>MNIQTTVEPTSAERAEKLQGMGCKRKRVEDIRFTQGKGNYVDDVKLPGMLFGDFVRSSHAHARIKSIDTSKAKALPGVFAVLTAADLKPLNLHYMPTLAGDVQAVLADEKVLFQNQEVAFVVAKDRYVAADAIELVEVDYEPLPVLVDPFKAMEPDAPLLREDIKDKMTGAHGARKHHNHIFRWEIGDKEGTDATFAKAEVVSKDMFTYHRVHPSPLETCQCVASMDKIKGELTLWGTFQAPHVIRTVVSLISGLPEHKIHVIAPDIGGGFGNKVGAYSGYVCAVVASIVLGVPVKWVEDRMENLSTTSFARDYHMTTELAATKDGKILAMRCHVLADHGAFDACADPSKWPAGFMNICTGSYDMPVAHLAVDGVYTNKASGGVAYRCSFRVTEAVYAIERAIETLAQRLEMDSADLRIKNFIQPEQFPYMAPLGWEYDSGNYPLAMKKAMDTVGYHQLRAEQKAKQEAFKRGETREIMGIGISFFTEIVGAGPSKNCDILGVSMFDSAEIRIHPTGSVIARMGTKSQGQGHETTYAQIIATELGIPADDIMIEEGNTDTAPYGLGTYGSRSTPTAGAATAVAARKIKAKAQMIAAHMLEVHEGDLEWDVDRFRVKGLPEKFKTMKELAWASYNSPPPNLEPGLEAVNYYDPPNMTYPFGAYFCIMDIDVDTGVAKTRRFYALDDCGTRINPMIIEGQVHGGLTEAFAVAMGQEIRYDEQGNVLGASFMDFFLPTAVETPKWETDYTVTPSPHHPIGAKGVGESPHVGGVPCFSNAVNDAYAFLNAGHIQMPHDAWRLWKVGEQLGLHV</sequence>
<geneLocation type="plasmid">
    <name>megaplasmid pHCG3</name>
</geneLocation>